<feature type="signal peptide" evidence="1">
    <location>
        <begin position="1"/>
        <end position="33"/>
    </location>
</feature>
<feature type="chain" id="PRO_0000021616" description="Leucine-rich repeat-containing protein 3B">
    <location>
        <begin position="34"/>
        <end position="259"/>
    </location>
</feature>
<feature type="transmembrane region" description="Helical" evidence="1">
    <location>
        <begin position="205"/>
        <end position="225"/>
    </location>
</feature>
<feature type="domain" description="LRRNT">
    <location>
        <begin position="34"/>
        <end position="64"/>
    </location>
</feature>
<feature type="repeat" description="LRR 1">
    <location>
        <begin position="65"/>
        <end position="86"/>
    </location>
</feature>
<feature type="repeat" description="LRR 2">
    <location>
        <begin position="89"/>
        <end position="110"/>
    </location>
</feature>
<feature type="repeat" description="LRR 3">
    <location>
        <begin position="114"/>
        <end position="135"/>
    </location>
</feature>
<feature type="domain" description="LRRCT">
    <location>
        <begin position="145"/>
        <end position="197"/>
    </location>
</feature>
<feature type="glycosylation site" description="N-linked (GlcNAc...) asparagine" evidence="1">
    <location>
        <position position="47"/>
    </location>
</feature>
<feature type="glycosylation site" description="N-linked (GlcNAc...) asparagine" evidence="1">
    <location>
        <position position="94"/>
    </location>
</feature>
<feature type="strand" evidence="3">
    <location>
        <begin position="255"/>
        <end position="258"/>
    </location>
</feature>
<organism>
    <name type="scientific">Homo sapiens</name>
    <name type="common">Human</name>
    <dbReference type="NCBI Taxonomy" id="9606"/>
    <lineage>
        <taxon>Eukaryota</taxon>
        <taxon>Metazoa</taxon>
        <taxon>Chordata</taxon>
        <taxon>Craniata</taxon>
        <taxon>Vertebrata</taxon>
        <taxon>Euteleostomi</taxon>
        <taxon>Mammalia</taxon>
        <taxon>Eutheria</taxon>
        <taxon>Euarchontoglires</taxon>
        <taxon>Primates</taxon>
        <taxon>Haplorrhini</taxon>
        <taxon>Catarrhini</taxon>
        <taxon>Hominidae</taxon>
        <taxon>Homo</taxon>
    </lineage>
</organism>
<dbReference type="EMBL" id="AF396933">
    <property type="protein sequence ID" value="AAK84157.1"/>
    <property type="molecule type" value="mRNA"/>
</dbReference>
<dbReference type="EMBL" id="AY358282">
    <property type="protein sequence ID" value="AAQ88649.1"/>
    <property type="molecule type" value="mRNA"/>
</dbReference>
<dbReference type="EMBL" id="BC040656">
    <property type="protein sequence ID" value="AAH40656.1"/>
    <property type="molecule type" value="mRNA"/>
</dbReference>
<dbReference type="EMBL" id="BC067784">
    <property type="protein sequence ID" value="AAH67784.1"/>
    <property type="molecule type" value="mRNA"/>
</dbReference>
<dbReference type="EMBL" id="BC087849">
    <property type="protein sequence ID" value="AAH87849.1"/>
    <property type="molecule type" value="mRNA"/>
</dbReference>
<dbReference type="CCDS" id="CCDS2644.1"/>
<dbReference type="RefSeq" id="NP_001304737.1">
    <property type="nucleotide sequence ID" value="NM_001317808.2"/>
</dbReference>
<dbReference type="RefSeq" id="NP_001304738.1">
    <property type="nucleotide sequence ID" value="NM_001317809.2"/>
</dbReference>
<dbReference type="RefSeq" id="NP_001304739.1">
    <property type="nucleotide sequence ID" value="NM_001317810.3"/>
</dbReference>
<dbReference type="RefSeq" id="NP_001304740.1">
    <property type="nucleotide sequence ID" value="NM_001317811.2"/>
</dbReference>
<dbReference type="RefSeq" id="NP_001382574.1">
    <property type="nucleotide sequence ID" value="NM_001395645.1"/>
</dbReference>
<dbReference type="RefSeq" id="NP_001382575.1">
    <property type="nucleotide sequence ID" value="NM_001395646.1"/>
</dbReference>
<dbReference type="RefSeq" id="NP_001382576.1">
    <property type="nucleotide sequence ID" value="NM_001395647.1"/>
</dbReference>
<dbReference type="RefSeq" id="NP_443185.1">
    <property type="nucleotide sequence ID" value="NM_052953.4"/>
</dbReference>
<dbReference type="RefSeq" id="XP_005264906.1">
    <property type="nucleotide sequence ID" value="XM_005264849.3"/>
</dbReference>
<dbReference type="RefSeq" id="XP_005264907.1">
    <property type="nucleotide sequence ID" value="XM_005264850.4"/>
</dbReference>
<dbReference type="RefSeq" id="XP_011531634.1">
    <property type="nucleotide sequence ID" value="XM_011533332.4"/>
</dbReference>
<dbReference type="RefSeq" id="XP_016861164.1">
    <property type="nucleotide sequence ID" value="XM_017005675.1"/>
</dbReference>
<dbReference type="RefSeq" id="XP_047303358.1">
    <property type="nucleotide sequence ID" value="XM_047447402.1"/>
</dbReference>
<dbReference type="RefSeq" id="XP_054201115.1">
    <property type="nucleotide sequence ID" value="XM_054345140.1"/>
</dbReference>
<dbReference type="RefSeq" id="XP_054201116.1">
    <property type="nucleotide sequence ID" value="XM_054345141.1"/>
</dbReference>
<dbReference type="PDB" id="5EMA">
    <property type="method" value="X-ray"/>
    <property type="resolution" value="1.32 A"/>
    <property type="chains" value="B=252-259"/>
</dbReference>
<dbReference type="PDBsum" id="5EMA"/>
<dbReference type="SMR" id="Q96PB8"/>
<dbReference type="BioGRID" id="125477">
    <property type="interactions" value="14"/>
</dbReference>
<dbReference type="FunCoup" id="Q96PB8">
    <property type="interactions" value="90"/>
</dbReference>
<dbReference type="IntAct" id="Q96PB8">
    <property type="interactions" value="12"/>
</dbReference>
<dbReference type="STRING" id="9606.ENSP00000379880"/>
<dbReference type="GlyCosmos" id="Q96PB8">
    <property type="glycosylation" value="2 sites, No reported glycans"/>
</dbReference>
<dbReference type="GlyGen" id="Q96PB8">
    <property type="glycosylation" value="3 sites, 1 O-linked glycan (1 site)"/>
</dbReference>
<dbReference type="iPTMnet" id="Q96PB8"/>
<dbReference type="PhosphoSitePlus" id="Q96PB8"/>
<dbReference type="BioMuta" id="LRRC3B"/>
<dbReference type="DMDM" id="24211927"/>
<dbReference type="MassIVE" id="Q96PB8"/>
<dbReference type="PaxDb" id="9606-ENSP00000379880"/>
<dbReference type="PeptideAtlas" id="Q96PB8"/>
<dbReference type="Antibodypedia" id="2670">
    <property type="antibodies" value="99 antibodies from 21 providers"/>
</dbReference>
<dbReference type="DNASU" id="116135"/>
<dbReference type="Ensembl" id="ENST00000396641.7">
    <property type="protein sequence ID" value="ENSP00000379880.2"/>
    <property type="gene ID" value="ENSG00000179796.13"/>
</dbReference>
<dbReference type="Ensembl" id="ENST00000417744.5">
    <property type="protein sequence ID" value="ENSP00000406370.1"/>
    <property type="gene ID" value="ENSG00000179796.13"/>
</dbReference>
<dbReference type="Ensembl" id="ENST00000456208.2">
    <property type="protein sequence ID" value="ENSP00000394940.2"/>
    <property type="gene ID" value="ENSG00000179796.13"/>
</dbReference>
<dbReference type="Ensembl" id="ENST00000648296.1">
    <property type="protein sequence ID" value="ENSP00000497471.1"/>
    <property type="gene ID" value="ENSG00000179796.13"/>
</dbReference>
<dbReference type="GeneID" id="116135"/>
<dbReference type="KEGG" id="hsa:116135"/>
<dbReference type="MANE-Select" id="ENST00000396641.7">
    <property type="protein sequence ID" value="ENSP00000379880.2"/>
    <property type="RefSeq nucleotide sequence ID" value="NM_052953.4"/>
    <property type="RefSeq protein sequence ID" value="NP_443185.1"/>
</dbReference>
<dbReference type="UCSC" id="uc003cdp.4">
    <property type="organism name" value="human"/>
</dbReference>
<dbReference type="AGR" id="HGNC:28105"/>
<dbReference type="CTD" id="116135"/>
<dbReference type="DisGeNET" id="116135"/>
<dbReference type="GeneCards" id="LRRC3B"/>
<dbReference type="HGNC" id="HGNC:28105">
    <property type="gene designation" value="LRRC3B"/>
</dbReference>
<dbReference type="HPA" id="ENSG00000179796">
    <property type="expression patterns" value="Tissue enhanced (brain, skeletal muscle, testis)"/>
</dbReference>
<dbReference type="MIM" id="618996">
    <property type="type" value="gene"/>
</dbReference>
<dbReference type="neXtProt" id="NX_Q96PB8"/>
<dbReference type="OpenTargets" id="ENSG00000179796"/>
<dbReference type="PharmGKB" id="PA134962068"/>
<dbReference type="VEuPathDB" id="HostDB:ENSG00000179796"/>
<dbReference type="eggNOG" id="KOG4237">
    <property type="taxonomic scope" value="Eukaryota"/>
</dbReference>
<dbReference type="GeneTree" id="ENSGT00940000157780"/>
<dbReference type="HOGENOM" id="CLU_064640_0_0_1"/>
<dbReference type="InParanoid" id="Q96PB8"/>
<dbReference type="OMA" id="PKGCACQ"/>
<dbReference type="OrthoDB" id="10068119at2759"/>
<dbReference type="PAN-GO" id="Q96PB8">
    <property type="GO annotations" value="2 GO annotations based on evolutionary models"/>
</dbReference>
<dbReference type="PhylomeDB" id="Q96PB8"/>
<dbReference type="TreeFam" id="TF327070"/>
<dbReference type="PathwayCommons" id="Q96PB8"/>
<dbReference type="SignaLink" id="Q96PB8"/>
<dbReference type="BioGRID-ORCS" id="116135">
    <property type="hits" value="9 hits in 1139 CRISPR screens"/>
</dbReference>
<dbReference type="ChiTaRS" id="LRRC3B">
    <property type="organism name" value="human"/>
</dbReference>
<dbReference type="GenomeRNAi" id="116135"/>
<dbReference type="Pharos" id="Q96PB8">
    <property type="development level" value="Tbio"/>
</dbReference>
<dbReference type="PRO" id="PR:Q96PB8"/>
<dbReference type="Proteomes" id="UP000005640">
    <property type="component" value="Chromosome 3"/>
</dbReference>
<dbReference type="RNAct" id="Q96PB8">
    <property type="molecule type" value="protein"/>
</dbReference>
<dbReference type="Bgee" id="ENSG00000179796">
    <property type="expression patterns" value="Expressed in ventricular zone and 130 other cell types or tissues"/>
</dbReference>
<dbReference type="ExpressionAtlas" id="Q96PB8">
    <property type="expression patterns" value="baseline and differential"/>
</dbReference>
<dbReference type="GO" id="GO:0031012">
    <property type="term" value="C:extracellular matrix"/>
    <property type="evidence" value="ECO:0000318"/>
    <property type="project" value="GO_Central"/>
</dbReference>
<dbReference type="GO" id="GO:0005615">
    <property type="term" value="C:extracellular space"/>
    <property type="evidence" value="ECO:0000318"/>
    <property type="project" value="GO_Central"/>
</dbReference>
<dbReference type="GO" id="GO:0016020">
    <property type="term" value="C:membrane"/>
    <property type="evidence" value="ECO:0007669"/>
    <property type="project" value="UniProtKB-SubCell"/>
</dbReference>
<dbReference type="FunFam" id="3.80.10.10:FF:000069">
    <property type="entry name" value="leucine-rich repeat-containing protein 3B"/>
    <property type="match status" value="1"/>
</dbReference>
<dbReference type="Gene3D" id="3.80.10.10">
    <property type="entry name" value="Ribonuclease Inhibitor"/>
    <property type="match status" value="1"/>
</dbReference>
<dbReference type="InterPro" id="IPR001611">
    <property type="entry name" value="Leu-rich_rpt"/>
</dbReference>
<dbReference type="InterPro" id="IPR003591">
    <property type="entry name" value="Leu-rich_rpt_typical-subtyp"/>
</dbReference>
<dbReference type="InterPro" id="IPR032675">
    <property type="entry name" value="LRR_dom_sf"/>
</dbReference>
<dbReference type="InterPro" id="IPR000372">
    <property type="entry name" value="LRRNT"/>
</dbReference>
<dbReference type="PANTHER" id="PTHR24366">
    <property type="entry name" value="IG(IMMUNOGLOBULIN) AND LRR(LEUCINE RICH REPEAT) DOMAINS"/>
    <property type="match status" value="1"/>
</dbReference>
<dbReference type="PANTHER" id="PTHR24366:SF96">
    <property type="entry name" value="LEUCINE RICH REPEAT CONTAINING 53"/>
    <property type="match status" value="1"/>
</dbReference>
<dbReference type="Pfam" id="PF00560">
    <property type="entry name" value="LRR_1"/>
    <property type="match status" value="1"/>
</dbReference>
<dbReference type="Pfam" id="PF13855">
    <property type="entry name" value="LRR_8"/>
    <property type="match status" value="1"/>
</dbReference>
<dbReference type="Pfam" id="PF01462">
    <property type="entry name" value="LRRNT"/>
    <property type="match status" value="1"/>
</dbReference>
<dbReference type="SMART" id="SM00369">
    <property type="entry name" value="LRR_TYP"/>
    <property type="match status" value="3"/>
</dbReference>
<dbReference type="SMART" id="SM00013">
    <property type="entry name" value="LRRNT"/>
    <property type="match status" value="1"/>
</dbReference>
<dbReference type="SUPFAM" id="SSF52058">
    <property type="entry name" value="L domain-like"/>
    <property type="match status" value="1"/>
</dbReference>
<dbReference type="PROSITE" id="PS51450">
    <property type="entry name" value="LRR"/>
    <property type="match status" value="3"/>
</dbReference>
<sequence length="259" mass="29275">MNLVDLWLTRSLSMCLLLQSFVLMILCFHSASMCPKGCLCSSSGGLNVTCSNANLKEIPRDLPPETVLLYLDSNQITSIPNEIFKDLHQLRVLNLSKNGIEFIDEHAFKGVAETLQTLDLSDNRIQSVHKNAFNNLKARARIANNPWHCDCTLQQVLRSMASNHETAHNVICKTSVLDEHAGRPFLNAANDADLCNLPKKTTDYAMLVTMFGWFTMVISYVVYYVRQNQEDARRHLEYLKSLPSRQKKADEPDDISTVV</sequence>
<proteinExistence type="evidence at protein level"/>
<reference key="1">
    <citation type="submission" date="2001-10" db="EMBL/GenBank/DDBJ databases">
        <authorList>
            <person name="Yu L."/>
            <person name="Xu Z."/>
            <person name="Han W."/>
            <person name="Li X."/>
            <person name="Lu X."/>
            <person name="Lou F."/>
            <person name="Wang Q."/>
            <person name="Zhao Y."/>
            <person name="Jing Y."/>
            <person name="Plass C."/>
            <person name="Strout M.P."/>
            <person name="Yu F."/>
            <person name="Krahe R."/>
            <person name="Caligiuri M.A."/>
        </authorList>
    </citation>
    <scope>NUCLEOTIDE SEQUENCE [MRNA]</scope>
</reference>
<reference key="2">
    <citation type="journal article" date="2003" name="Genome Res.">
        <title>The secreted protein discovery initiative (SPDI), a large-scale effort to identify novel human secreted and transmembrane proteins: a bioinformatics assessment.</title>
        <authorList>
            <person name="Clark H.F."/>
            <person name="Gurney A.L."/>
            <person name="Abaya E."/>
            <person name="Baker K."/>
            <person name="Baldwin D.T."/>
            <person name="Brush J."/>
            <person name="Chen J."/>
            <person name="Chow B."/>
            <person name="Chui C."/>
            <person name="Crowley C."/>
            <person name="Currell B."/>
            <person name="Deuel B."/>
            <person name="Dowd P."/>
            <person name="Eaton D."/>
            <person name="Foster J.S."/>
            <person name="Grimaldi C."/>
            <person name="Gu Q."/>
            <person name="Hass P.E."/>
            <person name="Heldens S."/>
            <person name="Huang A."/>
            <person name="Kim H.S."/>
            <person name="Klimowski L."/>
            <person name="Jin Y."/>
            <person name="Johnson S."/>
            <person name="Lee J."/>
            <person name="Lewis L."/>
            <person name="Liao D."/>
            <person name="Mark M.R."/>
            <person name="Robbie E."/>
            <person name="Sanchez C."/>
            <person name="Schoenfeld J."/>
            <person name="Seshagiri S."/>
            <person name="Simmons L."/>
            <person name="Singh J."/>
            <person name="Smith V."/>
            <person name="Stinson J."/>
            <person name="Vagts A."/>
            <person name="Vandlen R.L."/>
            <person name="Watanabe C."/>
            <person name="Wieand D."/>
            <person name="Woods K."/>
            <person name="Xie M.-H."/>
            <person name="Yansura D.G."/>
            <person name="Yi S."/>
            <person name="Yu G."/>
            <person name="Yuan J."/>
            <person name="Zhang M."/>
            <person name="Zhang Z."/>
            <person name="Goddard A.D."/>
            <person name="Wood W.I."/>
            <person name="Godowski P.J."/>
            <person name="Gray A.M."/>
        </authorList>
    </citation>
    <scope>NUCLEOTIDE SEQUENCE [LARGE SCALE MRNA]</scope>
</reference>
<reference key="3">
    <citation type="journal article" date="2004" name="Genome Res.">
        <title>The status, quality, and expansion of the NIH full-length cDNA project: the Mammalian Gene Collection (MGC).</title>
        <authorList>
            <consortium name="The MGC Project Team"/>
        </authorList>
    </citation>
    <scope>NUCLEOTIDE SEQUENCE [LARGE SCALE MRNA]</scope>
    <source>
        <tissue>Brain</tissue>
        <tissue>Testis</tissue>
    </source>
</reference>
<keyword id="KW-0002">3D-structure</keyword>
<keyword id="KW-0325">Glycoprotein</keyword>
<keyword id="KW-0433">Leucine-rich repeat</keyword>
<keyword id="KW-0472">Membrane</keyword>
<keyword id="KW-1267">Proteomics identification</keyword>
<keyword id="KW-1185">Reference proteome</keyword>
<keyword id="KW-0677">Repeat</keyword>
<keyword id="KW-0732">Signal</keyword>
<keyword id="KW-0812">Transmembrane</keyword>
<keyword id="KW-1133">Transmembrane helix</keyword>
<gene>
    <name type="primary">LRRC3B</name>
    <name type="synonym">LRP15</name>
    <name type="ORF">UNQ195/PRO221</name>
</gene>
<name>LRC3B_HUMAN</name>
<evidence type="ECO:0000255" key="1"/>
<evidence type="ECO:0000305" key="2"/>
<evidence type="ECO:0007829" key="3">
    <source>
        <dbReference type="PDB" id="5EMA"/>
    </source>
</evidence>
<accession>Q96PB8</accession>
<accession>Q5M8T0</accession>
<protein>
    <recommendedName>
        <fullName>Leucine-rich repeat-containing protein 3B</fullName>
    </recommendedName>
    <alternativeName>
        <fullName>Leucine-rich repeat protein 15</fullName>
    </alternativeName>
</protein>
<comment type="interaction">
    <interactant intactId="EBI-17775622">
        <id>Q96PB8</id>
    </interactant>
    <interactant intactId="EBI-6139068">
        <id>P11049</id>
        <label>CD37</label>
    </interactant>
    <organismsDiffer>false</organismsDiffer>
    <experiments>3</experiments>
</comment>
<comment type="interaction">
    <interactant intactId="EBI-17775622">
        <id>Q96PB8</id>
    </interactant>
    <interactant intactId="EBI-4319440">
        <id>P54849</id>
        <label>EMP1</label>
    </interactant>
    <organismsDiffer>false</organismsDiffer>
    <experiments>3</experiments>
</comment>
<comment type="interaction">
    <interactant intactId="EBI-17775622">
        <id>Q96PB8</id>
    </interactant>
    <interactant intactId="EBI-12070086">
        <id>Q5J8X5</id>
        <label>MS4A13</label>
    </interactant>
    <organismsDiffer>false</organismsDiffer>
    <experiments>3</experiments>
</comment>
<comment type="interaction">
    <interactant intactId="EBI-17775622">
        <id>Q96PB8</id>
    </interactant>
    <interactant intactId="EBI-17963211">
        <id>Q6QAJ8</id>
        <label>TMEM220</label>
    </interactant>
    <organismsDiffer>false</organismsDiffer>
    <experiments>3</experiments>
</comment>
<comment type="interaction">
    <interactant intactId="EBI-17775622">
        <id>Q96PB8</id>
    </interactant>
    <interactant intactId="EBI-2852148">
        <id>Q9H2L4</id>
        <label>TMEM60</label>
    </interactant>
    <organismsDiffer>false</organismsDiffer>
    <experiments>3</experiments>
</comment>
<comment type="interaction">
    <interactant intactId="EBI-17775622">
        <id>Q96PB8</id>
    </interactant>
    <interactant intactId="EBI-751210">
        <id>Q96EC8</id>
        <label>YIPF6</label>
    </interactant>
    <organismsDiffer>false</organismsDiffer>
    <experiments>3</experiments>
</comment>
<comment type="subcellular location">
    <subcellularLocation>
        <location evidence="2">Membrane</location>
        <topology evidence="2">Single-pass membrane protein</topology>
    </subcellularLocation>
</comment>
<comment type="similarity">
    <text evidence="2">Belongs to the LRRC3 family.</text>
</comment>